<sequence>MNPAHLLVLLAVCVSLLGAANIPPQSLNLYQFKNMIQCAGTQLCVAYVKYGCYCGPGGTGTPLDQLDRCCQTHDHCYDNAKKFGNCIPYFKTYEYTCNKPDLTCTDAKGSCARNVCDCDRAAAICFAAAPYNLANFGINKETHCQ</sequence>
<reference key="1">
    <citation type="journal article" date="2007" name="Peptides">
        <title>A bactericidal homodimeric phospholipases A(2) from Bungarus fasciatus venom.</title>
        <authorList>
            <person name="Xu C."/>
            <person name="Ma D."/>
            <person name="Yu H."/>
            <person name="Li Z."/>
            <person name="Liang J."/>
            <person name="Lin G."/>
            <person name="Zhang Y."/>
            <person name="Lai R."/>
        </authorList>
    </citation>
    <scope>NUCLEOTIDE SEQUENCE [MRNA]</scope>
    <scope>PROTEIN SEQUENCE OF 28-47; 83-89 AND 92-100</scope>
    <scope>FUNCTION</scope>
    <scope>SUBUNIT</scope>
    <scope>IDENTIFICATION BY MASS SPECTROMETRY</scope>
    <source>
        <tissue>Venom</tissue>
        <tissue>Venom gland</tissue>
    </source>
</reference>
<proteinExistence type="evidence at protein level"/>
<accession>A6MEY4</accession>
<keyword id="KW-0044">Antibiotic</keyword>
<keyword id="KW-0929">Antimicrobial</keyword>
<keyword id="KW-1203">Blood coagulation cascade inhibiting toxin</keyword>
<keyword id="KW-0106">Calcium</keyword>
<keyword id="KW-0903">Direct protein sequencing</keyword>
<keyword id="KW-1015">Disulfide bond</keyword>
<keyword id="KW-1199">Hemostasis impairing toxin</keyword>
<keyword id="KW-0378">Hydrolase</keyword>
<keyword id="KW-0442">Lipid degradation</keyword>
<keyword id="KW-0443">Lipid metabolism</keyword>
<keyword id="KW-0479">Metal-binding</keyword>
<keyword id="KW-0964">Secreted</keyword>
<keyword id="KW-0732">Signal</keyword>
<keyword id="KW-0800">Toxin</keyword>
<protein>
    <recommendedName>
        <fullName>Basic phospholipase A2 BFPA</fullName>
        <shortName>svPLA2</shortName>
        <ecNumber>3.1.1.4</ecNumber>
    </recommendedName>
    <alternativeName>
        <fullName>Antimicrobial phospholipase A2</fullName>
    </alternativeName>
    <alternativeName>
        <fullName>Phosphatidylcholine 2-acylhydrolase</fullName>
    </alternativeName>
</protein>
<evidence type="ECO:0000250" key="1"/>
<evidence type="ECO:0000255" key="2">
    <source>
        <dbReference type="PROSITE-ProRule" id="PRU10035"/>
    </source>
</evidence>
<evidence type="ECO:0000255" key="3">
    <source>
        <dbReference type="PROSITE-ProRule" id="PRU10036"/>
    </source>
</evidence>
<evidence type="ECO:0000269" key="4">
    <source>
    </source>
</evidence>
<evidence type="ECO:0000305" key="5"/>
<name>PA2B_BUNFA</name>
<organism>
    <name type="scientific">Bungarus fasciatus</name>
    <name type="common">Banded krait</name>
    <name type="synonym">Pseudoboa fasciata</name>
    <dbReference type="NCBI Taxonomy" id="8613"/>
    <lineage>
        <taxon>Eukaryota</taxon>
        <taxon>Metazoa</taxon>
        <taxon>Chordata</taxon>
        <taxon>Craniata</taxon>
        <taxon>Vertebrata</taxon>
        <taxon>Euteleostomi</taxon>
        <taxon>Lepidosauria</taxon>
        <taxon>Squamata</taxon>
        <taxon>Bifurcata</taxon>
        <taxon>Unidentata</taxon>
        <taxon>Episquamata</taxon>
        <taxon>Toxicofera</taxon>
        <taxon>Serpentes</taxon>
        <taxon>Colubroidea</taxon>
        <taxon>Elapidae</taxon>
        <taxon>Bungarinae</taxon>
        <taxon>Bungarus</taxon>
    </lineage>
</organism>
<comment type="function">
    <text evidence="4">Snake venom phospholipase A2 (PLA2) that inhibits blood coagulation and shows bactericidal activities against both Gram-negative and -positive bacteria (E.coli, MIC=0.4 uM and S.aureus, MIC=0.1 uM). PLA2 catalyzes the calcium-dependent hydrolysis of the 2-acyl groups in 3-sn-phosphoglycerides.</text>
</comment>
<comment type="catalytic activity">
    <reaction evidence="2 3">
        <text>a 1,2-diacyl-sn-glycero-3-phosphocholine + H2O = a 1-acyl-sn-glycero-3-phosphocholine + a fatty acid + H(+)</text>
        <dbReference type="Rhea" id="RHEA:15801"/>
        <dbReference type="ChEBI" id="CHEBI:15377"/>
        <dbReference type="ChEBI" id="CHEBI:15378"/>
        <dbReference type="ChEBI" id="CHEBI:28868"/>
        <dbReference type="ChEBI" id="CHEBI:57643"/>
        <dbReference type="ChEBI" id="CHEBI:58168"/>
        <dbReference type="EC" id="3.1.1.4"/>
    </reaction>
</comment>
<comment type="cofactor">
    <cofactor evidence="1">
        <name>Ca(2+)</name>
        <dbReference type="ChEBI" id="CHEBI:29108"/>
    </cofactor>
    <text evidence="1">Binds 1 Ca(2+) ion per subunit.</text>
</comment>
<comment type="subunit">
    <text evidence="4">Homodimer; disulfide-linked.</text>
</comment>
<comment type="subcellular location">
    <subcellularLocation>
        <location>Secreted</location>
    </subcellularLocation>
</comment>
<comment type="tissue specificity">
    <text>Expressed by the venom gland.</text>
</comment>
<comment type="similarity">
    <text evidence="5">Belongs to the phospholipase A2 family. Group I subfamily. D49 sub-subfamily.</text>
</comment>
<feature type="signal peptide" evidence="4">
    <location>
        <begin position="1"/>
        <end position="27"/>
    </location>
</feature>
<feature type="chain" id="PRO_0000419214" description="Basic phospholipase A2 BFPA">
    <location>
        <begin position="28"/>
        <end position="145"/>
    </location>
</feature>
<feature type="active site" evidence="1">
    <location>
        <position position="73"/>
    </location>
</feature>
<feature type="active site" evidence="1">
    <location>
        <position position="119"/>
    </location>
</feature>
<feature type="binding site" evidence="1">
    <location>
        <position position="53"/>
    </location>
    <ligand>
        <name>Ca(2+)</name>
        <dbReference type="ChEBI" id="CHEBI:29108"/>
    </ligand>
</feature>
<feature type="binding site" evidence="1">
    <location>
        <position position="55"/>
    </location>
    <ligand>
        <name>Ca(2+)</name>
        <dbReference type="ChEBI" id="CHEBI:29108"/>
    </ligand>
</feature>
<feature type="binding site" evidence="1">
    <location>
        <position position="57"/>
    </location>
    <ligand>
        <name>Ca(2+)</name>
        <dbReference type="ChEBI" id="CHEBI:29108"/>
    </ligand>
</feature>
<feature type="binding site" evidence="1">
    <location>
        <position position="74"/>
    </location>
    <ligand>
        <name>Ca(2+)</name>
        <dbReference type="ChEBI" id="CHEBI:29108"/>
    </ligand>
</feature>
<feature type="disulfide bond" evidence="1">
    <location>
        <begin position="38"/>
        <end position="97"/>
    </location>
</feature>
<feature type="disulfide bond" description="Interchain" evidence="5">
    <location>
        <position position="44"/>
    </location>
</feature>
<feature type="disulfide bond" evidence="1">
    <location>
        <begin position="52"/>
        <end position="144"/>
    </location>
</feature>
<feature type="disulfide bond" evidence="1">
    <location>
        <begin position="54"/>
        <end position="70"/>
    </location>
</feature>
<feature type="disulfide bond" evidence="1">
    <location>
        <begin position="69"/>
        <end position="125"/>
    </location>
</feature>
<feature type="disulfide bond" evidence="1">
    <location>
        <begin position="76"/>
        <end position="118"/>
    </location>
</feature>
<feature type="disulfide bond" evidence="1">
    <location>
        <begin position="86"/>
        <end position="111"/>
    </location>
</feature>
<feature type="disulfide bond" evidence="1">
    <location>
        <begin position="104"/>
        <end position="116"/>
    </location>
</feature>
<dbReference type="EC" id="3.1.1.4"/>
<dbReference type="EMBL" id="DQ868667">
    <property type="protein sequence ID" value="ABI64153.1"/>
    <property type="molecule type" value="mRNA"/>
</dbReference>
<dbReference type="SMR" id="A6MEY4"/>
<dbReference type="GO" id="GO:0005576">
    <property type="term" value="C:extracellular region"/>
    <property type="evidence" value="ECO:0007669"/>
    <property type="project" value="UniProtKB-SubCell"/>
</dbReference>
<dbReference type="GO" id="GO:0005509">
    <property type="term" value="F:calcium ion binding"/>
    <property type="evidence" value="ECO:0007669"/>
    <property type="project" value="InterPro"/>
</dbReference>
<dbReference type="GO" id="GO:0047498">
    <property type="term" value="F:calcium-dependent phospholipase A2 activity"/>
    <property type="evidence" value="ECO:0007669"/>
    <property type="project" value="TreeGrafter"/>
</dbReference>
<dbReference type="GO" id="GO:0005543">
    <property type="term" value="F:phospholipid binding"/>
    <property type="evidence" value="ECO:0007669"/>
    <property type="project" value="TreeGrafter"/>
</dbReference>
<dbReference type="GO" id="GO:0090729">
    <property type="term" value="F:toxin activity"/>
    <property type="evidence" value="ECO:0007669"/>
    <property type="project" value="UniProtKB-KW"/>
</dbReference>
<dbReference type="GO" id="GO:0050482">
    <property type="term" value="P:arachidonate secretion"/>
    <property type="evidence" value="ECO:0007669"/>
    <property type="project" value="InterPro"/>
</dbReference>
<dbReference type="GO" id="GO:0042742">
    <property type="term" value="P:defense response to bacterium"/>
    <property type="evidence" value="ECO:0007669"/>
    <property type="project" value="UniProtKB-KW"/>
</dbReference>
<dbReference type="GO" id="GO:0016042">
    <property type="term" value="P:lipid catabolic process"/>
    <property type="evidence" value="ECO:0007669"/>
    <property type="project" value="UniProtKB-KW"/>
</dbReference>
<dbReference type="GO" id="GO:0006644">
    <property type="term" value="P:phospholipid metabolic process"/>
    <property type="evidence" value="ECO:0007669"/>
    <property type="project" value="InterPro"/>
</dbReference>
<dbReference type="CDD" id="cd00125">
    <property type="entry name" value="PLA2c"/>
    <property type="match status" value="1"/>
</dbReference>
<dbReference type="FunFam" id="1.20.90.10:FF:000007">
    <property type="entry name" value="Acidic phospholipase A2"/>
    <property type="match status" value="1"/>
</dbReference>
<dbReference type="Gene3D" id="1.20.90.10">
    <property type="entry name" value="Phospholipase A2 domain"/>
    <property type="match status" value="1"/>
</dbReference>
<dbReference type="InterPro" id="IPR001211">
    <property type="entry name" value="PLipase_A2"/>
</dbReference>
<dbReference type="InterPro" id="IPR033112">
    <property type="entry name" value="PLipase_A2_Asp_AS"/>
</dbReference>
<dbReference type="InterPro" id="IPR016090">
    <property type="entry name" value="PLipase_A2_dom"/>
</dbReference>
<dbReference type="InterPro" id="IPR036444">
    <property type="entry name" value="PLipase_A2_dom_sf"/>
</dbReference>
<dbReference type="InterPro" id="IPR033113">
    <property type="entry name" value="PLipase_A2_His_AS"/>
</dbReference>
<dbReference type="PANTHER" id="PTHR11716:SF94">
    <property type="entry name" value="PHOSPHOLIPASE A2"/>
    <property type="match status" value="1"/>
</dbReference>
<dbReference type="PANTHER" id="PTHR11716">
    <property type="entry name" value="PHOSPHOLIPASE A2 FAMILY MEMBER"/>
    <property type="match status" value="1"/>
</dbReference>
<dbReference type="Pfam" id="PF00068">
    <property type="entry name" value="Phospholip_A2_1"/>
    <property type="match status" value="1"/>
</dbReference>
<dbReference type="PRINTS" id="PR00389">
    <property type="entry name" value="PHPHLIPASEA2"/>
</dbReference>
<dbReference type="SMART" id="SM00085">
    <property type="entry name" value="PA2c"/>
    <property type="match status" value="1"/>
</dbReference>
<dbReference type="SUPFAM" id="SSF48619">
    <property type="entry name" value="Phospholipase A2, PLA2"/>
    <property type="match status" value="1"/>
</dbReference>
<dbReference type="PROSITE" id="PS00119">
    <property type="entry name" value="PA2_ASP"/>
    <property type="match status" value="1"/>
</dbReference>
<dbReference type="PROSITE" id="PS00118">
    <property type="entry name" value="PA2_HIS"/>
    <property type="match status" value="1"/>
</dbReference>